<reference key="1">
    <citation type="journal article" date="2003" name="Nature">
        <title>The genome sequence of Bacillus anthracis Ames and comparison to closely related bacteria.</title>
        <authorList>
            <person name="Read T.D."/>
            <person name="Peterson S.N."/>
            <person name="Tourasse N.J."/>
            <person name="Baillie L.W."/>
            <person name="Paulsen I.T."/>
            <person name="Nelson K.E."/>
            <person name="Tettelin H."/>
            <person name="Fouts D.E."/>
            <person name="Eisen J.A."/>
            <person name="Gill S.R."/>
            <person name="Holtzapple E.K."/>
            <person name="Okstad O.A."/>
            <person name="Helgason E."/>
            <person name="Rilstone J."/>
            <person name="Wu M."/>
            <person name="Kolonay J.F."/>
            <person name="Beanan M.J."/>
            <person name="Dodson R.J."/>
            <person name="Brinkac L.M."/>
            <person name="Gwinn M.L."/>
            <person name="DeBoy R.T."/>
            <person name="Madpu R."/>
            <person name="Daugherty S.C."/>
            <person name="Durkin A.S."/>
            <person name="Haft D.H."/>
            <person name="Nelson W.C."/>
            <person name="Peterson J.D."/>
            <person name="Pop M."/>
            <person name="Khouri H.M."/>
            <person name="Radune D."/>
            <person name="Benton J.L."/>
            <person name="Mahamoud Y."/>
            <person name="Jiang L."/>
            <person name="Hance I.R."/>
            <person name="Weidman J.F."/>
            <person name="Berry K.J."/>
            <person name="Plaut R.D."/>
            <person name="Wolf A.M."/>
            <person name="Watkins K.L."/>
            <person name="Nierman W.C."/>
            <person name="Hazen A."/>
            <person name="Cline R.T."/>
            <person name="Redmond C."/>
            <person name="Thwaite J.E."/>
            <person name="White O."/>
            <person name="Salzberg S.L."/>
            <person name="Thomason B."/>
            <person name="Friedlander A.M."/>
            <person name="Koehler T.M."/>
            <person name="Hanna P.C."/>
            <person name="Kolstoe A.-B."/>
            <person name="Fraser C.M."/>
        </authorList>
    </citation>
    <scope>NUCLEOTIDE SEQUENCE [LARGE SCALE GENOMIC DNA]</scope>
    <source>
        <strain>Ames / isolate Porton</strain>
    </source>
</reference>
<reference key="2">
    <citation type="submission" date="2004-01" db="EMBL/GenBank/DDBJ databases">
        <title>Complete genome sequence of Bacillus anthracis Sterne.</title>
        <authorList>
            <person name="Brettin T.S."/>
            <person name="Bruce D."/>
            <person name="Challacombe J.F."/>
            <person name="Gilna P."/>
            <person name="Han C."/>
            <person name="Hill K."/>
            <person name="Hitchcock P."/>
            <person name="Jackson P."/>
            <person name="Keim P."/>
            <person name="Longmire J."/>
            <person name="Lucas S."/>
            <person name="Okinaka R."/>
            <person name="Richardson P."/>
            <person name="Rubin E."/>
            <person name="Tice H."/>
        </authorList>
    </citation>
    <scope>NUCLEOTIDE SEQUENCE [LARGE SCALE GENOMIC DNA]</scope>
    <source>
        <strain>Sterne</strain>
    </source>
</reference>
<reference key="3">
    <citation type="journal article" date="2009" name="J. Bacteriol.">
        <title>The complete genome sequence of Bacillus anthracis Ames 'Ancestor'.</title>
        <authorList>
            <person name="Ravel J."/>
            <person name="Jiang L."/>
            <person name="Stanley S.T."/>
            <person name="Wilson M.R."/>
            <person name="Decker R.S."/>
            <person name="Read T.D."/>
            <person name="Worsham P."/>
            <person name="Keim P.S."/>
            <person name="Salzberg S.L."/>
            <person name="Fraser-Liggett C.M."/>
            <person name="Rasko D.A."/>
        </authorList>
    </citation>
    <scope>NUCLEOTIDE SEQUENCE [LARGE SCALE GENOMIC DNA]</scope>
    <source>
        <strain>Ames ancestor</strain>
    </source>
</reference>
<accession>Q81QB7</accession>
<accession>Q6HYJ4</accession>
<accession>Q6KSJ5</accession>
<organism>
    <name type="scientific">Bacillus anthracis</name>
    <dbReference type="NCBI Taxonomy" id="1392"/>
    <lineage>
        <taxon>Bacteria</taxon>
        <taxon>Bacillati</taxon>
        <taxon>Bacillota</taxon>
        <taxon>Bacilli</taxon>
        <taxon>Bacillales</taxon>
        <taxon>Bacillaceae</taxon>
        <taxon>Bacillus</taxon>
        <taxon>Bacillus cereus group</taxon>
    </lineage>
</organism>
<proteinExistence type="inferred from homology"/>
<sequence length="332" mass="36663">MNPLIFKENRPFDLIAVGRLCVDLNANETQRPMEETRTFTKYVGGSPANIAIGAARLGLQTGFIGKVSDDQMGRFITGYLKDNKINTDQIPIDCTGAVTGLAFTEIKSPEDCSILMYRDNVADLNLDPTEVSEDYIKQSKALLISGTALAKSPSREAVFLALEYARKHDVVVFFDVDYRPYTWQSEAETAVYYNLAAEKSDVIIGTREEFDMMEKLLNYEKSNDQVTAERWFSHHAKIVVIKHGGDGSIAYTRDGQSHRGGIFKTKVLKTFGAGDSYASAFIYGLMQGLEIPQAMRLGGASASIVISKHSCSDAMPTRAEISAFMETAEELV</sequence>
<keyword id="KW-0067">ATP-binding</keyword>
<keyword id="KW-0418">Kinase</keyword>
<keyword id="KW-0547">Nucleotide-binding</keyword>
<keyword id="KW-1185">Reference proteome</keyword>
<keyword id="KW-0808">Transferase</keyword>
<evidence type="ECO:0000255" key="1">
    <source>
        <dbReference type="HAMAP-Rule" id="MF_01668"/>
    </source>
</evidence>
<comment type="function">
    <text evidence="1">Catalyzes the phosphorylation of 5-dehydro-2-deoxy-D-gluconate (2-deoxy-5-keto-D-gluconate or DKG) to 6-phospho-5-dehydro-2-deoxy-D-gluconate (DKGP).</text>
</comment>
<comment type="catalytic activity">
    <reaction evidence="1">
        <text>5-dehydro-2-deoxy-D-gluconate + ATP = 6-phospho-5-dehydro-2-deoxy-D-gluconate + ADP + H(+)</text>
        <dbReference type="Rhea" id="RHEA:13497"/>
        <dbReference type="ChEBI" id="CHEBI:15378"/>
        <dbReference type="ChEBI" id="CHEBI:16669"/>
        <dbReference type="ChEBI" id="CHEBI:30616"/>
        <dbReference type="ChEBI" id="CHEBI:57949"/>
        <dbReference type="ChEBI" id="CHEBI:456216"/>
        <dbReference type="EC" id="2.7.1.92"/>
    </reaction>
</comment>
<comment type="pathway">
    <text evidence="1">Polyol metabolism; myo-inositol degradation into acetyl-CoA; acetyl-CoA from myo-inositol: step 5/7.</text>
</comment>
<comment type="similarity">
    <text evidence="1">Belongs to the carbohydrate kinase PfkB family.</text>
</comment>
<name>IOLC_BACAN</name>
<gene>
    <name evidence="1" type="primary">iolC</name>
    <name type="ordered locus">BA_2512</name>
    <name type="ordered locus">GBAA_2512</name>
    <name type="ordered locus">BAS2333</name>
</gene>
<protein>
    <recommendedName>
        <fullName evidence="1">5-dehydro-2-deoxygluconokinase</fullName>
        <ecNumber evidence="1">2.7.1.92</ecNumber>
    </recommendedName>
    <alternativeName>
        <fullName evidence="1">2-deoxy-5-keto-D-gluconate kinase</fullName>
        <shortName evidence="1">DKG kinase</shortName>
    </alternativeName>
</protein>
<feature type="chain" id="PRO_0000352285" description="5-dehydro-2-deoxygluconokinase">
    <location>
        <begin position="1"/>
        <end position="332"/>
    </location>
</feature>
<dbReference type="EC" id="2.7.1.92" evidence="1"/>
<dbReference type="EMBL" id="AE016879">
    <property type="protein sequence ID" value="AAP26370.1"/>
    <property type="molecule type" value="Genomic_DNA"/>
</dbReference>
<dbReference type="EMBL" id="AE017334">
    <property type="protein sequence ID" value="AAT31623.1"/>
    <property type="molecule type" value="Genomic_DNA"/>
</dbReference>
<dbReference type="EMBL" id="AE017225">
    <property type="protein sequence ID" value="AAT54645.1"/>
    <property type="molecule type" value="Genomic_DNA"/>
</dbReference>
<dbReference type="RefSeq" id="NP_844884.1">
    <property type="nucleotide sequence ID" value="NC_003997.3"/>
</dbReference>
<dbReference type="RefSeq" id="WP_001068616.1">
    <property type="nucleotide sequence ID" value="NZ_WXXJ01000008.1"/>
</dbReference>
<dbReference type="RefSeq" id="YP_028594.1">
    <property type="nucleotide sequence ID" value="NC_005945.1"/>
</dbReference>
<dbReference type="SMR" id="Q81QB7"/>
<dbReference type="STRING" id="261594.GBAA_2512"/>
<dbReference type="DNASU" id="1084063"/>
<dbReference type="GeneID" id="45022375"/>
<dbReference type="KEGG" id="ban:BA_2512"/>
<dbReference type="KEGG" id="banh:HYU01_12470"/>
<dbReference type="KEGG" id="bar:GBAA_2512"/>
<dbReference type="KEGG" id="bat:BAS2333"/>
<dbReference type="PATRIC" id="fig|198094.11.peg.2484"/>
<dbReference type="eggNOG" id="COG0524">
    <property type="taxonomic scope" value="Bacteria"/>
</dbReference>
<dbReference type="HOGENOM" id="CLU_027634_6_0_9"/>
<dbReference type="OMA" id="CANFMPT"/>
<dbReference type="OrthoDB" id="9813569at2"/>
<dbReference type="UniPathway" id="UPA00076">
    <property type="reaction ID" value="UER00146"/>
</dbReference>
<dbReference type="Proteomes" id="UP000000427">
    <property type="component" value="Chromosome"/>
</dbReference>
<dbReference type="Proteomes" id="UP000000594">
    <property type="component" value="Chromosome"/>
</dbReference>
<dbReference type="GO" id="GO:0047590">
    <property type="term" value="F:5-dehydro-2-deoxygluconokinase activity"/>
    <property type="evidence" value="ECO:0007669"/>
    <property type="project" value="UniProtKB-UniRule"/>
</dbReference>
<dbReference type="GO" id="GO:0005524">
    <property type="term" value="F:ATP binding"/>
    <property type="evidence" value="ECO:0007669"/>
    <property type="project" value="UniProtKB-UniRule"/>
</dbReference>
<dbReference type="GO" id="GO:0019310">
    <property type="term" value="P:inositol catabolic process"/>
    <property type="evidence" value="ECO:0007669"/>
    <property type="project" value="UniProtKB-UniRule"/>
</dbReference>
<dbReference type="CDD" id="cd01166">
    <property type="entry name" value="KdgK"/>
    <property type="match status" value="1"/>
</dbReference>
<dbReference type="Gene3D" id="3.40.1190.20">
    <property type="match status" value="1"/>
</dbReference>
<dbReference type="Gene3D" id="2.20.150.10">
    <property type="entry name" value="putative 5-dehydro-2- deoxygluconokinase"/>
    <property type="match status" value="1"/>
</dbReference>
<dbReference type="HAMAP" id="MF_01668">
    <property type="entry name" value="IolC"/>
    <property type="match status" value="1"/>
</dbReference>
<dbReference type="InterPro" id="IPR002173">
    <property type="entry name" value="Carboh/pur_kinase_PfkB_CS"/>
</dbReference>
<dbReference type="InterPro" id="IPR022841">
    <property type="entry name" value="DKG_kinase_firmi"/>
</dbReference>
<dbReference type="InterPro" id="IPR030830">
    <property type="entry name" value="Myo_inos_IolC"/>
</dbReference>
<dbReference type="InterPro" id="IPR023314">
    <property type="entry name" value="Myo_inos_IolC-like_sf"/>
</dbReference>
<dbReference type="InterPro" id="IPR050306">
    <property type="entry name" value="PfkB_Carbo_kinase"/>
</dbReference>
<dbReference type="InterPro" id="IPR011611">
    <property type="entry name" value="PfkB_dom"/>
</dbReference>
<dbReference type="InterPro" id="IPR029056">
    <property type="entry name" value="Ribokinase-like"/>
</dbReference>
<dbReference type="NCBIfam" id="TIGR04382">
    <property type="entry name" value="myo_inos_iolC_N"/>
    <property type="match status" value="1"/>
</dbReference>
<dbReference type="PANTHER" id="PTHR43085:SF49">
    <property type="entry name" value="5-DEHYDRO-2-DEOXYGLUCONOKINASE"/>
    <property type="match status" value="1"/>
</dbReference>
<dbReference type="PANTHER" id="PTHR43085">
    <property type="entry name" value="HEXOKINASE FAMILY MEMBER"/>
    <property type="match status" value="1"/>
</dbReference>
<dbReference type="Pfam" id="PF00294">
    <property type="entry name" value="PfkB"/>
    <property type="match status" value="1"/>
</dbReference>
<dbReference type="SUPFAM" id="SSF53613">
    <property type="entry name" value="Ribokinase-like"/>
    <property type="match status" value="1"/>
</dbReference>
<dbReference type="PROSITE" id="PS00584">
    <property type="entry name" value="PFKB_KINASES_2"/>
    <property type="match status" value="1"/>
</dbReference>